<reference key="1">
    <citation type="journal article" date="2004" name="Proc. Natl. Acad. Sci. U.S.A.">
        <title>The louse-borne human pathogen Bartonella quintana is a genomic derivative of the zoonotic agent Bartonella henselae.</title>
        <authorList>
            <person name="Alsmark U.C.M."/>
            <person name="Frank A.C."/>
            <person name="Karlberg E.O."/>
            <person name="Legault B.-A."/>
            <person name="Ardell D.H."/>
            <person name="Canbaeck B."/>
            <person name="Eriksson A.-S."/>
            <person name="Naeslund A.K."/>
            <person name="Handley S.A."/>
            <person name="Huvet M."/>
            <person name="La Scola B."/>
            <person name="Holmberg M."/>
            <person name="Andersson S.G.E."/>
        </authorList>
    </citation>
    <scope>NUCLEOTIDE SEQUENCE [LARGE SCALE GENOMIC DNA]</scope>
    <source>
        <strain>ATCC 49882 / DSM 28221 / CCUG 30454 / Houston 1</strain>
    </source>
</reference>
<protein>
    <recommendedName>
        <fullName evidence="1">ATP synthase subunit b 1</fullName>
    </recommendedName>
    <alternativeName>
        <fullName evidence="1">ATP synthase F(0) sector subunit b 1</fullName>
    </alternativeName>
    <alternativeName>
        <fullName evidence="1">ATPase subunit I 1</fullName>
    </alternativeName>
    <alternativeName>
        <fullName evidence="1">F-type ATPase subunit b 1</fullName>
        <shortName evidence="1">F-ATPase subunit b 1</shortName>
    </alternativeName>
</protein>
<keyword id="KW-0066">ATP synthesis</keyword>
<keyword id="KW-0997">Cell inner membrane</keyword>
<keyword id="KW-1003">Cell membrane</keyword>
<keyword id="KW-0138">CF(0)</keyword>
<keyword id="KW-0375">Hydrogen ion transport</keyword>
<keyword id="KW-0406">Ion transport</keyword>
<keyword id="KW-0472">Membrane</keyword>
<keyword id="KW-0812">Transmembrane</keyword>
<keyword id="KW-1133">Transmembrane helix</keyword>
<keyword id="KW-0813">Transport</keyword>
<dbReference type="EMBL" id="BX897699">
    <property type="protein sequence ID" value="CAF27222.1"/>
    <property type="molecule type" value="Genomic_DNA"/>
</dbReference>
<dbReference type="RefSeq" id="WP_011180347.1">
    <property type="nucleotide sequence ID" value="NZ_LRIJ02000001.1"/>
</dbReference>
<dbReference type="SMR" id="Q6G5L0"/>
<dbReference type="PaxDb" id="283166-BH04130"/>
<dbReference type="EnsemblBacteria" id="CAF27222">
    <property type="protein sequence ID" value="CAF27222"/>
    <property type="gene ID" value="BH04130"/>
</dbReference>
<dbReference type="KEGG" id="bhe:BH04130"/>
<dbReference type="eggNOG" id="COG0711">
    <property type="taxonomic scope" value="Bacteria"/>
</dbReference>
<dbReference type="OrthoDB" id="9805716at2"/>
<dbReference type="Proteomes" id="UP000000421">
    <property type="component" value="Chromosome"/>
</dbReference>
<dbReference type="GO" id="GO:0005886">
    <property type="term" value="C:plasma membrane"/>
    <property type="evidence" value="ECO:0007669"/>
    <property type="project" value="UniProtKB-SubCell"/>
</dbReference>
<dbReference type="GO" id="GO:0045259">
    <property type="term" value="C:proton-transporting ATP synthase complex"/>
    <property type="evidence" value="ECO:0007669"/>
    <property type="project" value="UniProtKB-KW"/>
</dbReference>
<dbReference type="GO" id="GO:0046933">
    <property type="term" value="F:proton-transporting ATP synthase activity, rotational mechanism"/>
    <property type="evidence" value="ECO:0007669"/>
    <property type="project" value="UniProtKB-UniRule"/>
</dbReference>
<dbReference type="GO" id="GO:0046961">
    <property type="term" value="F:proton-transporting ATPase activity, rotational mechanism"/>
    <property type="evidence" value="ECO:0007669"/>
    <property type="project" value="TreeGrafter"/>
</dbReference>
<dbReference type="CDD" id="cd06503">
    <property type="entry name" value="ATP-synt_Fo_b"/>
    <property type="match status" value="1"/>
</dbReference>
<dbReference type="Gene3D" id="6.10.250.1580">
    <property type="match status" value="1"/>
</dbReference>
<dbReference type="HAMAP" id="MF_01398">
    <property type="entry name" value="ATP_synth_b_bprime"/>
    <property type="match status" value="1"/>
</dbReference>
<dbReference type="InterPro" id="IPR002146">
    <property type="entry name" value="ATP_synth_b/b'su_bac/chlpt"/>
</dbReference>
<dbReference type="InterPro" id="IPR050059">
    <property type="entry name" value="ATP_synthase_B_chain"/>
</dbReference>
<dbReference type="NCBIfam" id="NF006612">
    <property type="entry name" value="PRK09174.1"/>
    <property type="match status" value="1"/>
</dbReference>
<dbReference type="PANTHER" id="PTHR33445:SF1">
    <property type="entry name" value="ATP SYNTHASE SUBUNIT B"/>
    <property type="match status" value="1"/>
</dbReference>
<dbReference type="PANTHER" id="PTHR33445">
    <property type="entry name" value="ATP SYNTHASE SUBUNIT B', CHLOROPLASTIC"/>
    <property type="match status" value="1"/>
</dbReference>
<dbReference type="Pfam" id="PF00430">
    <property type="entry name" value="ATP-synt_B"/>
    <property type="match status" value="1"/>
</dbReference>
<sequence>MFISSAYAQNTETSLEHIKNVAERIDRVFPPFDFVHFGSHLFWLAISFGLFYLFISRVIVPRIGGVIETRRDRIASDLDQAMRMKQEADIVVETYERKLAQARSQAHVIAQTASEEIKQKVELERKEIEANLEKKLTDAEKQIAKIRDKAMKSVGSIAEEVALEIVKKLIDVEVSKESVRSAVKATGY</sequence>
<feature type="chain" id="PRO_0000368342" description="ATP synthase subunit b 1">
    <location>
        <begin position="1"/>
        <end position="188"/>
    </location>
</feature>
<feature type="transmembrane region" description="Helical" evidence="1">
    <location>
        <begin position="35"/>
        <end position="55"/>
    </location>
</feature>
<organism>
    <name type="scientific">Bartonella henselae (strain ATCC 49882 / DSM 28221 / CCUG 30454 / Houston 1)</name>
    <name type="common">Rochalimaea henselae</name>
    <dbReference type="NCBI Taxonomy" id="283166"/>
    <lineage>
        <taxon>Bacteria</taxon>
        <taxon>Pseudomonadati</taxon>
        <taxon>Pseudomonadota</taxon>
        <taxon>Alphaproteobacteria</taxon>
        <taxon>Hyphomicrobiales</taxon>
        <taxon>Bartonellaceae</taxon>
        <taxon>Bartonella</taxon>
    </lineage>
</organism>
<gene>
    <name evidence="1" type="primary">atpF1</name>
    <name type="ordered locus">BH04130</name>
</gene>
<comment type="function">
    <text evidence="1">F(1)F(0) ATP synthase produces ATP from ADP in the presence of a proton or sodium gradient. F-type ATPases consist of two structural domains, F(1) containing the extramembraneous catalytic core and F(0) containing the membrane proton channel, linked together by a central stalk and a peripheral stalk. During catalysis, ATP synthesis in the catalytic domain of F(1) is coupled via a rotary mechanism of the central stalk subunits to proton translocation.</text>
</comment>
<comment type="function">
    <text evidence="1">Component of the F(0) channel, it forms part of the peripheral stalk, linking F(1) to F(0).</text>
</comment>
<comment type="subunit">
    <text evidence="1">F-type ATPases have 2 components, F(1) - the catalytic core - and F(0) - the membrane proton channel. F(1) has five subunits: alpha(3), beta(3), gamma(1), delta(1), epsilon(1). F(0) has three main subunits: a(1), b(2) and c(10-14). The alpha and beta chains form an alternating ring which encloses part of the gamma chain. F(1) is attached to F(0) by a central stalk formed by the gamma and epsilon chains, while a peripheral stalk is formed by the delta and b chains.</text>
</comment>
<comment type="subcellular location">
    <subcellularLocation>
        <location evidence="1">Cell inner membrane</location>
        <topology evidence="1">Single-pass membrane protein</topology>
    </subcellularLocation>
</comment>
<comment type="similarity">
    <text evidence="1">Belongs to the ATPase B chain family.</text>
</comment>
<evidence type="ECO:0000255" key="1">
    <source>
        <dbReference type="HAMAP-Rule" id="MF_01398"/>
    </source>
</evidence>
<accession>Q6G5L0</accession>
<name>ATPF1_BARHE</name>
<proteinExistence type="inferred from homology"/>